<proteinExistence type="inferred from homology"/>
<keyword id="KW-0414">Isoprene biosynthesis</keyword>
<keyword id="KW-0456">Lyase</keyword>
<keyword id="KW-0479">Metal-binding</keyword>
<keyword id="KW-1185">Reference proteome</keyword>
<name>ISPF_CLOPE</name>
<evidence type="ECO:0000255" key="1">
    <source>
        <dbReference type="HAMAP-Rule" id="MF_00107"/>
    </source>
</evidence>
<reference key="1">
    <citation type="journal article" date="2002" name="Proc. Natl. Acad. Sci. U.S.A.">
        <title>Complete genome sequence of Clostridium perfringens, an anaerobic flesh-eater.</title>
        <authorList>
            <person name="Shimizu T."/>
            <person name="Ohtani K."/>
            <person name="Hirakawa H."/>
            <person name="Ohshima K."/>
            <person name="Yamashita A."/>
            <person name="Shiba T."/>
            <person name="Ogasawara N."/>
            <person name="Hattori M."/>
            <person name="Kuhara S."/>
            <person name="Hayashi H."/>
        </authorList>
    </citation>
    <scope>NUCLEOTIDE SEQUENCE [LARGE SCALE GENOMIC DNA]</scope>
    <source>
        <strain>13 / Type A</strain>
    </source>
</reference>
<feature type="chain" id="PRO_0000189458" description="2-C-methyl-D-erythritol 2,4-cyclodiphosphate synthase">
    <location>
        <begin position="1"/>
        <end position="156"/>
    </location>
</feature>
<feature type="binding site" evidence="1">
    <location>
        <begin position="8"/>
        <end position="10"/>
    </location>
    <ligand>
        <name>4-CDP-2-C-methyl-D-erythritol 2-phosphate</name>
        <dbReference type="ChEBI" id="CHEBI:57919"/>
    </ligand>
</feature>
<feature type="binding site" evidence="1">
    <location>
        <position position="8"/>
    </location>
    <ligand>
        <name>a divalent metal cation</name>
        <dbReference type="ChEBI" id="CHEBI:60240"/>
    </ligand>
</feature>
<feature type="binding site" evidence="1">
    <location>
        <position position="10"/>
    </location>
    <ligand>
        <name>a divalent metal cation</name>
        <dbReference type="ChEBI" id="CHEBI:60240"/>
    </ligand>
</feature>
<feature type="binding site" evidence="1">
    <location>
        <begin position="34"/>
        <end position="35"/>
    </location>
    <ligand>
        <name>4-CDP-2-C-methyl-D-erythritol 2-phosphate</name>
        <dbReference type="ChEBI" id="CHEBI:57919"/>
    </ligand>
</feature>
<feature type="binding site" evidence="1">
    <location>
        <position position="42"/>
    </location>
    <ligand>
        <name>a divalent metal cation</name>
        <dbReference type="ChEBI" id="CHEBI:60240"/>
    </ligand>
</feature>
<feature type="binding site" evidence="1">
    <location>
        <begin position="56"/>
        <end position="58"/>
    </location>
    <ligand>
        <name>4-CDP-2-C-methyl-D-erythritol 2-phosphate</name>
        <dbReference type="ChEBI" id="CHEBI:57919"/>
    </ligand>
</feature>
<feature type="binding site" evidence="1">
    <location>
        <begin position="61"/>
        <end position="65"/>
    </location>
    <ligand>
        <name>4-CDP-2-C-methyl-D-erythritol 2-phosphate</name>
        <dbReference type="ChEBI" id="CHEBI:57919"/>
    </ligand>
</feature>
<feature type="binding site" evidence="1">
    <location>
        <begin position="100"/>
        <end position="106"/>
    </location>
    <ligand>
        <name>4-CDP-2-C-methyl-D-erythritol 2-phosphate</name>
        <dbReference type="ChEBI" id="CHEBI:57919"/>
    </ligand>
</feature>
<feature type="binding site" evidence="1">
    <location>
        <begin position="132"/>
        <end position="135"/>
    </location>
    <ligand>
        <name>4-CDP-2-C-methyl-D-erythritol 2-phosphate</name>
        <dbReference type="ChEBI" id="CHEBI:57919"/>
    </ligand>
</feature>
<feature type="binding site" evidence="1">
    <location>
        <position position="139"/>
    </location>
    <ligand>
        <name>4-CDP-2-C-methyl-D-erythritol 2-phosphate</name>
        <dbReference type="ChEBI" id="CHEBI:57919"/>
    </ligand>
</feature>
<feature type="site" description="Transition state stabilizer" evidence="1">
    <location>
        <position position="34"/>
    </location>
</feature>
<feature type="site" description="Transition state stabilizer" evidence="1">
    <location>
        <position position="133"/>
    </location>
</feature>
<comment type="function">
    <text evidence="1">Involved in the biosynthesis of isopentenyl diphosphate (IPP) and dimethylallyl diphosphate (DMAPP), two major building blocks of isoprenoid compounds. Catalyzes the conversion of 4-diphosphocytidyl-2-C-methyl-D-erythritol 2-phosphate (CDP-ME2P) to 2-C-methyl-D-erythritol 2,4-cyclodiphosphate (ME-CPP) with a corresponding release of cytidine 5-monophosphate (CMP).</text>
</comment>
<comment type="catalytic activity">
    <reaction evidence="1">
        <text>4-CDP-2-C-methyl-D-erythritol 2-phosphate = 2-C-methyl-D-erythritol 2,4-cyclic diphosphate + CMP</text>
        <dbReference type="Rhea" id="RHEA:23864"/>
        <dbReference type="ChEBI" id="CHEBI:57919"/>
        <dbReference type="ChEBI" id="CHEBI:58483"/>
        <dbReference type="ChEBI" id="CHEBI:60377"/>
        <dbReference type="EC" id="4.6.1.12"/>
    </reaction>
</comment>
<comment type="cofactor">
    <cofactor evidence="1">
        <name>a divalent metal cation</name>
        <dbReference type="ChEBI" id="CHEBI:60240"/>
    </cofactor>
    <text evidence="1">Binds 1 divalent metal cation per subunit.</text>
</comment>
<comment type="pathway">
    <text evidence="1">Isoprenoid biosynthesis; isopentenyl diphosphate biosynthesis via DXP pathway; isopentenyl diphosphate from 1-deoxy-D-xylulose 5-phosphate: step 4/6.</text>
</comment>
<comment type="subunit">
    <text evidence="1">Homotrimer.</text>
</comment>
<comment type="similarity">
    <text evidence="1">Belongs to the IspF family.</text>
</comment>
<organism>
    <name type="scientific">Clostridium perfringens (strain 13 / Type A)</name>
    <dbReference type="NCBI Taxonomy" id="195102"/>
    <lineage>
        <taxon>Bacteria</taxon>
        <taxon>Bacillati</taxon>
        <taxon>Bacillota</taxon>
        <taxon>Clostridia</taxon>
        <taxon>Eubacteriales</taxon>
        <taxon>Clostridiaceae</taxon>
        <taxon>Clostridium</taxon>
    </lineage>
</organism>
<protein>
    <recommendedName>
        <fullName evidence="1">2-C-methyl-D-erythritol 2,4-cyclodiphosphate synthase</fullName>
        <shortName evidence="1">MECDP-synthase</shortName>
        <shortName evidence="1">MECPP-synthase</shortName>
        <shortName evidence="1">MECPS</shortName>
        <ecNumber evidence="1">4.6.1.12</ecNumber>
    </recommendedName>
</protein>
<dbReference type="EC" id="4.6.1.12" evidence="1"/>
<dbReference type="EMBL" id="BA000016">
    <property type="protein sequence ID" value="BAB82022.1"/>
    <property type="molecule type" value="Genomic_DNA"/>
</dbReference>
<dbReference type="RefSeq" id="WP_003457926.1">
    <property type="nucleotide sequence ID" value="NC_003366.1"/>
</dbReference>
<dbReference type="SMR" id="Q8XI08"/>
<dbReference type="STRING" id="195102.gene:10491624"/>
<dbReference type="GeneID" id="93001106"/>
<dbReference type="KEGG" id="cpe:CPE2316"/>
<dbReference type="HOGENOM" id="CLU_084630_2_0_9"/>
<dbReference type="UniPathway" id="UPA00056">
    <property type="reaction ID" value="UER00095"/>
</dbReference>
<dbReference type="Proteomes" id="UP000000818">
    <property type="component" value="Chromosome"/>
</dbReference>
<dbReference type="GO" id="GO:0008685">
    <property type="term" value="F:2-C-methyl-D-erythritol 2,4-cyclodiphosphate synthase activity"/>
    <property type="evidence" value="ECO:0007669"/>
    <property type="project" value="UniProtKB-UniRule"/>
</dbReference>
<dbReference type="GO" id="GO:0046872">
    <property type="term" value="F:metal ion binding"/>
    <property type="evidence" value="ECO:0007669"/>
    <property type="project" value="UniProtKB-KW"/>
</dbReference>
<dbReference type="GO" id="GO:0019288">
    <property type="term" value="P:isopentenyl diphosphate biosynthetic process, methylerythritol 4-phosphate pathway"/>
    <property type="evidence" value="ECO:0007669"/>
    <property type="project" value="UniProtKB-UniRule"/>
</dbReference>
<dbReference type="GO" id="GO:0016114">
    <property type="term" value="P:terpenoid biosynthetic process"/>
    <property type="evidence" value="ECO:0007669"/>
    <property type="project" value="InterPro"/>
</dbReference>
<dbReference type="CDD" id="cd00554">
    <property type="entry name" value="MECDP_synthase"/>
    <property type="match status" value="1"/>
</dbReference>
<dbReference type="FunFam" id="3.30.1330.50:FF:000001">
    <property type="entry name" value="2-C-methyl-D-erythritol 2,4-cyclodiphosphate synthase"/>
    <property type="match status" value="1"/>
</dbReference>
<dbReference type="Gene3D" id="3.30.1330.50">
    <property type="entry name" value="2-C-methyl-D-erythritol 2,4-cyclodiphosphate synthase"/>
    <property type="match status" value="1"/>
</dbReference>
<dbReference type="HAMAP" id="MF_00107">
    <property type="entry name" value="IspF"/>
    <property type="match status" value="1"/>
</dbReference>
<dbReference type="InterPro" id="IPR003526">
    <property type="entry name" value="MECDP_synthase"/>
</dbReference>
<dbReference type="InterPro" id="IPR020555">
    <property type="entry name" value="MECDP_synthase_CS"/>
</dbReference>
<dbReference type="InterPro" id="IPR036571">
    <property type="entry name" value="MECDP_synthase_sf"/>
</dbReference>
<dbReference type="NCBIfam" id="TIGR00151">
    <property type="entry name" value="ispF"/>
    <property type="match status" value="1"/>
</dbReference>
<dbReference type="PANTHER" id="PTHR43181">
    <property type="entry name" value="2-C-METHYL-D-ERYTHRITOL 2,4-CYCLODIPHOSPHATE SYNTHASE, CHLOROPLASTIC"/>
    <property type="match status" value="1"/>
</dbReference>
<dbReference type="PANTHER" id="PTHR43181:SF1">
    <property type="entry name" value="2-C-METHYL-D-ERYTHRITOL 2,4-CYCLODIPHOSPHATE SYNTHASE, CHLOROPLASTIC"/>
    <property type="match status" value="1"/>
</dbReference>
<dbReference type="Pfam" id="PF02542">
    <property type="entry name" value="YgbB"/>
    <property type="match status" value="1"/>
</dbReference>
<dbReference type="SUPFAM" id="SSF69765">
    <property type="entry name" value="IpsF-like"/>
    <property type="match status" value="1"/>
</dbReference>
<dbReference type="PROSITE" id="PS01350">
    <property type="entry name" value="ISPF"/>
    <property type="match status" value="1"/>
</dbReference>
<accession>Q8XI08</accession>
<gene>
    <name evidence="1" type="primary">ispF</name>
    <name type="ordered locus">CPE2316</name>
</gene>
<sequence length="156" mass="16866">MRIGMGYDVHKLVENRDLILGGVKIPYEKGLLGHSDADVLLHAIMDSLLGAAALGDIGKHFPDTDPKYKGADSIKLLEFVGELLNKNNYKISNIDATIIAQRPKMAPHIPTMRENIAKALNIDLDQINVKATTEEGLGFTGSGEGISSQSICLLVK</sequence>